<proteinExistence type="evidence at protein level"/>
<gene>
    <name evidence="1" type="primary">dtdA</name>
    <name type="synonym">dtd2</name>
    <name type="ordered locus">PYRAB00070</name>
    <name type="ORF">PAB2349</name>
</gene>
<sequence>MKVIMTTKVDKASMNIMQKLIENFGFKETELKFDGNPVYKKDDMVILTTNDEMIYYDYLDREIEKQLSFKPEIIAFASRHSSKQKLPALTTHVTGNWGEAMYGGKDESFAIAIPSAMKLALLKMNELNDLGWTVCYEATHHGPSELEVPSFFIEIGSSEEEWVNDRAGEIIAETIVYVLDNYENSKFKVALGIGGGHYAPKQTKRALNSDLAFGHILPKYAQPVSRDVILKAINRFHEKVEAIYVDWKGSKGETRQLAKSLAQELGLEFIKD</sequence>
<comment type="function">
    <text evidence="2 3">D-aminoacyl-tRNA deacylase with broad substrate specificity. By recycling D-aminoacyl-tRNA to D-amino acids and free tRNA molecules, this enzyme counteracts the toxicity associated with the formation of D-aminoacyl-tRNA entities in vivo. Catalyzes the hydrolysis of D-tyrosyl-tRNA(Tyr) and D-aspartyl-tRNA(Asp).</text>
</comment>
<comment type="catalytic activity">
    <reaction evidence="1 2 3">
        <text>a D-aminoacyl-tRNA + H2O = a tRNA + a D-alpha-amino acid + H(+)</text>
        <dbReference type="Rhea" id="RHEA:13953"/>
        <dbReference type="Rhea" id="RHEA-COMP:10123"/>
        <dbReference type="Rhea" id="RHEA-COMP:10124"/>
        <dbReference type="ChEBI" id="CHEBI:15377"/>
        <dbReference type="ChEBI" id="CHEBI:15378"/>
        <dbReference type="ChEBI" id="CHEBI:59871"/>
        <dbReference type="ChEBI" id="CHEBI:78442"/>
        <dbReference type="ChEBI" id="CHEBI:79333"/>
        <dbReference type="EC" id="3.1.1.96"/>
    </reaction>
</comment>
<comment type="catalytic activity">
    <reaction evidence="1">
        <text>glycyl-tRNA(Ala) + H2O = tRNA(Ala) + glycine + H(+)</text>
        <dbReference type="Rhea" id="RHEA:53744"/>
        <dbReference type="Rhea" id="RHEA-COMP:9657"/>
        <dbReference type="Rhea" id="RHEA-COMP:13640"/>
        <dbReference type="ChEBI" id="CHEBI:15377"/>
        <dbReference type="ChEBI" id="CHEBI:15378"/>
        <dbReference type="ChEBI" id="CHEBI:57305"/>
        <dbReference type="ChEBI" id="CHEBI:78442"/>
        <dbReference type="ChEBI" id="CHEBI:78522"/>
        <dbReference type="EC" id="3.1.1.96"/>
    </reaction>
</comment>
<comment type="catalytic activity">
    <reaction evidence="2 3">
        <text>D-tyrosyl-tRNA(Tyr) + H2O = D-tyrosine + tRNA(Tyr)</text>
        <dbReference type="Rhea" id="RHEA:25347"/>
        <dbReference type="Rhea" id="RHEA-COMP:9707"/>
        <dbReference type="Rhea" id="RHEA-COMP:9872"/>
        <dbReference type="ChEBI" id="CHEBI:15377"/>
        <dbReference type="ChEBI" id="CHEBI:58570"/>
        <dbReference type="ChEBI" id="CHEBI:78442"/>
        <dbReference type="ChEBI" id="CHEBI:78723"/>
    </reaction>
</comment>
<comment type="cofactor">
    <cofactor evidence="1 2">
        <name>Zn(2+)</name>
        <dbReference type="ChEBI" id="CHEBI:29105"/>
    </cofactor>
    <text evidence="1 2">Binds 2 Zn(2+) ions per subunit.</text>
</comment>
<comment type="biophysicochemical properties">
    <temperatureDependence>
        <text evidence="2">Thermostable.</text>
    </temperatureDependence>
</comment>
<comment type="subunit">
    <text evidence="1 2">Monomer.</text>
</comment>
<comment type="mass spectrometry"/>
<comment type="similarity">
    <text evidence="1 4">Belongs to the DtdA deacylase family.</text>
</comment>
<comment type="sequence caution" evidence="4">
    <conflict type="erroneous initiation">
        <sequence resource="EMBL-CDS" id="CCE69373"/>
    </conflict>
    <text>Extended N-terminus.</text>
</comment>
<reference key="1">
    <citation type="journal article" date="2003" name="Mol. Microbiol.">
        <title>An integrated analysis of the genome of the hyperthermophilic archaeon Pyrococcus abyssi.</title>
        <authorList>
            <person name="Cohen G.N."/>
            <person name="Barbe V."/>
            <person name="Flament D."/>
            <person name="Galperin M."/>
            <person name="Heilig R."/>
            <person name="Lecompte O."/>
            <person name="Poch O."/>
            <person name="Prieur D."/>
            <person name="Querellou J."/>
            <person name="Ripp R."/>
            <person name="Thierry J.-C."/>
            <person name="Van der Oost J."/>
            <person name="Weissenbach J."/>
            <person name="Zivanovic Y."/>
            <person name="Forterre P."/>
        </authorList>
    </citation>
    <scope>NUCLEOTIDE SEQUENCE [LARGE SCALE GENOMIC DNA]</scope>
    <source>
        <strain>GE5 / Orsay</strain>
    </source>
</reference>
<reference key="2">
    <citation type="journal article" date="2012" name="Curr. Microbiol.">
        <title>Re-annotation of two hyperthermophilic archaea Pyrococcus abyssi GE5 and Pyrococcus furiosus DSM 3638.</title>
        <authorList>
            <person name="Gao J."/>
            <person name="Wang J."/>
        </authorList>
    </citation>
    <scope>GENOME REANNOTATION</scope>
    <source>
        <strain>GE5 / Orsay</strain>
    </source>
</reference>
<reference key="3">
    <citation type="journal article" date="2006" name="J. Biol. Chem.">
        <title>Identification in archaea of a novel D-Tyr-tRNATyr deacylase.</title>
        <authorList>
            <person name="Ferri-Fioni M.-L."/>
            <person name="Fromant M."/>
            <person name="Bouin A.-P."/>
            <person name="Aubard C."/>
            <person name="Lazennec C."/>
            <person name="Plateau P."/>
            <person name="Blanquet S."/>
        </authorList>
    </citation>
    <scope>FUNCTION</scope>
    <scope>CATALYTIC ACTIVITY</scope>
    <scope>MASS SPECTROMETRY</scope>
    <scope>COFACTOR</scope>
    <scope>BIOPHYSICOCHEMICAL PROPERTIES</scope>
    <scope>SUBUNIT</scope>
    <scope>MUTAGENESIS OF SER-78; HIS-80; HIS-92; GLU-137; HIS-140; HIS-141; GLU-154; TRP-162; HIS-197 AND TYR-198</scope>
</reference>
<reference key="4">
    <citation type="journal article" date="2007" name="Nucleic Acids Res.">
        <title>GEK1, a gene product of Arabidopsis thaliana involved in ethanol tolerance, is a D-aminoacyl-tRNA deacylase.</title>
        <authorList>
            <person name="Wydau S."/>
            <person name="Ferri-Fioni M.-L."/>
            <person name="Blanquet S."/>
            <person name="Plateau P."/>
        </authorList>
    </citation>
    <scope>FUNCTION</scope>
    <scope>CATALYTIC ACTIVITY</scope>
    <scope>SUBSTRATE SPECIFICITY</scope>
</reference>
<keyword id="KW-0378">Hydrolase</keyword>
<keyword id="KW-0479">Metal-binding</keyword>
<keyword id="KW-0862">Zinc</keyword>
<name>DTDA_PYRAB</name>
<organism>
    <name type="scientific">Pyrococcus abyssi (strain GE5 / Orsay)</name>
    <dbReference type="NCBI Taxonomy" id="272844"/>
    <lineage>
        <taxon>Archaea</taxon>
        <taxon>Methanobacteriati</taxon>
        <taxon>Methanobacteriota</taxon>
        <taxon>Thermococci</taxon>
        <taxon>Thermococcales</taxon>
        <taxon>Thermococcaceae</taxon>
        <taxon>Pyrococcus</taxon>
    </lineage>
</organism>
<dbReference type="EC" id="3.1.1.96" evidence="1 2 3"/>
<dbReference type="EMBL" id="AJ248283">
    <property type="protein sequence ID" value="CAB48930.1"/>
    <property type="molecule type" value="Genomic_DNA"/>
</dbReference>
<dbReference type="EMBL" id="HE613800">
    <property type="protein sequence ID" value="CCE69373.1"/>
    <property type="status" value="ALT_INIT"/>
    <property type="molecule type" value="Genomic_DNA"/>
</dbReference>
<dbReference type="PIR" id="C75185">
    <property type="entry name" value="C75185"/>
</dbReference>
<dbReference type="RefSeq" id="WP_010867130.1">
    <property type="nucleotide sequence ID" value="NC_000868.1"/>
</dbReference>
<dbReference type="SMR" id="Q9V2R8"/>
<dbReference type="STRING" id="272844.PAB2349"/>
<dbReference type="KEGG" id="pab:PAB2349"/>
<dbReference type="PATRIC" id="fig|272844.11.peg.7"/>
<dbReference type="eggNOG" id="arCOG01616">
    <property type="taxonomic scope" value="Archaea"/>
</dbReference>
<dbReference type="HOGENOM" id="CLU_056464_1_0_2"/>
<dbReference type="OrthoDB" id="9863at2157"/>
<dbReference type="PhylomeDB" id="Q9V2R8"/>
<dbReference type="BRENDA" id="3.1.1.96">
    <property type="organism ID" value="5242"/>
</dbReference>
<dbReference type="SABIO-RK" id="Q9V2R8"/>
<dbReference type="Proteomes" id="UP000000810">
    <property type="component" value="Chromosome"/>
</dbReference>
<dbReference type="Proteomes" id="UP000009139">
    <property type="component" value="Chromosome"/>
</dbReference>
<dbReference type="GO" id="GO:0051500">
    <property type="term" value="F:D-tyrosyl-tRNA(Tyr) deacylase activity"/>
    <property type="evidence" value="ECO:0007669"/>
    <property type="project" value="RHEA"/>
</dbReference>
<dbReference type="GO" id="GO:0008270">
    <property type="term" value="F:zinc ion binding"/>
    <property type="evidence" value="ECO:0007669"/>
    <property type="project" value="UniProtKB-UniRule"/>
</dbReference>
<dbReference type="GO" id="GO:0019478">
    <property type="term" value="P:D-amino acid catabolic process"/>
    <property type="evidence" value="ECO:0007669"/>
    <property type="project" value="UniProtKB-UniRule"/>
</dbReference>
<dbReference type="Gene3D" id="3.40.50.10700">
    <property type="entry name" value="AF0625-like"/>
    <property type="match status" value="1"/>
</dbReference>
<dbReference type="Gene3D" id="3.40.630.50">
    <property type="entry name" value="AF0625-like"/>
    <property type="match status" value="1"/>
</dbReference>
<dbReference type="HAMAP" id="MF_00562">
    <property type="entry name" value="Deacylase_DtdA"/>
    <property type="match status" value="1"/>
</dbReference>
<dbReference type="InterPro" id="IPR018033">
    <property type="entry name" value="Deacylase_DtdA_archaea"/>
</dbReference>
<dbReference type="InterPro" id="IPR007508">
    <property type="entry name" value="DtdA"/>
</dbReference>
<dbReference type="NCBIfam" id="NF003074">
    <property type="entry name" value="PRK03995.1-6"/>
    <property type="match status" value="1"/>
</dbReference>
<dbReference type="PANTHER" id="PTHR34667">
    <property type="entry name" value="D-AMINOACYL-TRNA DEACYLASE"/>
    <property type="match status" value="1"/>
</dbReference>
<dbReference type="PANTHER" id="PTHR34667:SF1">
    <property type="entry name" value="D-AMINOACYL-TRNA DEACYLASE"/>
    <property type="match status" value="1"/>
</dbReference>
<dbReference type="Pfam" id="PF04414">
    <property type="entry name" value="tRNA_deacylase"/>
    <property type="match status" value="1"/>
</dbReference>
<dbReference type="PIRSF" id="PIRSF016210">
    <property type="entry name" value="UCP016210"/>
    <property type="match status" value="1"/>
</dbReference>
<dbReference type="SUPFAM" id="SSF142535">
    <property type="entry name" value="AF0625-like"/>
    <property type="match status" value="1"/>
</dbReference>
<evidence type="ECO:0000255" key="1">
    <source>
        <dbReference type="HAMAP-Rule" id="MF_00562"/>
    </source>
</evidence>
<evidence type="ECO:0000269" key="2">
    <source>
    </source>
</evidence>
<evidence type="ECO:0000269" key="3">
    <source>
    </source>
</evidence>
<evidence type="ECO:0000305" key="4"/>
<protein>
    <recommendedName>
        <fullName evidence="1">D-aminoacyl-tRNA deacylase</fullName>
        <ecNumber evidence="1 2 3">3.1.1.96</ecNumber>
    </recommendedName>
    <alternativeName>
        <fullName>D-tyrosyl-tRNA(Tyr) deacylase</fullName>
    </alternativeName>
</protein>
<feature type="chain" id="PRO_0000158969" description="D-aminoacyl-tRNA deacylase">
    <location>
        <begin position="1"/>
        <end position="272"/>
    </location>
</feature>
<feature type="mutagenesis site" description="Reduces deacylase activity." evidence="2">
    <original>S</original>
    <variation>A</variation>
    <location>
        <position position="78"/>
    </location>
</feature>
<feature type="mutagenesis site" description="Reduces deacylase activity." evidence="2">
    <original>H</original>
    <variation>A</variation>
    <location>
        <position position="80"/>
    </location>
</feature>
<feature type="mutagenesis site" description="Reduces deacylase activity." evidence="2">
    <original>H</original>
    <variation>A</variation>
    <location>
        <position position="92"/>
    </location>
</feature>
<feature type="mutagenesis site" description="10-fold decrease of deacylase activity." evidence="2">
    <original>E</original>
    <variation>A</variation>
    <location>
        <position position="137"/>
    </location>
</feature>
<feature type="mutagenesis site" description="Loss of deacylase activity." evidence="2">
    <original>H</original>
    <variation>A</variation>
    <location>
        <position position="140"/>
    </location>
</feature>
<feature type="mutagenesis site" description="No effect." evidence="2">
    <original>H</original>
    <variation>A</variation>
    <location>
        <position position="141"/>
    </location>
</feature>
<feature type="mutagenesis site" description="Reduces deacylase activity." evidence="2">
    <original>E</original>
    <variation>A</variation>
    <location>
        <position position="154"/>
    </location>
</feature>
<feature type="mutagenesis site" description="Increases deacylase activity." evidence="2">
    <original>W</original>
    <variation>A</variation>
    <location>
        <position position="162"/>
    </location>
</feature>
<feature type="mutagenesis site" description="Increases deacylase activity." evidence="2">
    <original>H</original>
    <variation>A</variation>
    <location>
        <position position="197"/>
    </location>
</feature>
<feature type="mutagenesis site" description="No effect." evidence="2">
    <original>Y</original>
    <variation>A</variation>
    <location>
        <position position="198"/>
    </location>
</feature>
<accession>Q9V2R8</accession>
<accession>G8ZFI2</accession>